<protein>
    <recommendedName>
        <fullName evidence="1">Dihydroorotate dehydrogenase (quinone)</fullName>
        <ecNumber evidence="1">1.3.5.2</ecNumber>
    </recommendedName>
    <alternativeName>
        <fullName evidence="1">DHOdehase</fullName>
        <shortName evidence="1">DHOD</shortName>
        <shortName evidence="1">DHODase</shortName>
    </alternativeName>
    <alternativeName>
        <fullName evidence="1">Dihydroorotate oxidase</fullName>
    </alternativeName>
</protein>
<evidence type="ECO:0000255" key="1">
    <source>
        <dbReference type="HAMAP-Rule" id="MF_00225"/>
    </source>
</evidence>
<feature type="chain" id="PRO_0000148441" description="Dihydroorotate dehydrogenase (quinone)">
    <location>
        <begin position="1"/>
        <end position="350"/>
    </location>
</feature>
<feature type="active site" description="Nucleophile" evidence="1">
    <location>
        <position position="175"/>
    </location>
</feature>
<feature type="binding site" evidence="1">
    <location>
        <begin position="61"/>
        <end position="65"/>
    </location>
    <ligand>
        <name>FMN</name>
        <dbReference type="ChEBI" id="CHEBI:58210"/>
    </ligand>
</feature>
<feature type="binding site" evidence="1">
    <location>
        <position position="65"/>
    </location>
    <ligand>
        <name>substrate</name>
    </ligand>
</feature>
<feature type="binding site" evidence="1">
    <location>
        <position position="85"/>
    </location>
    <ligand>
        <name>FMN</name>
        <dbReference type="ChEBI" id="CHEBI:58210"/>
    </ligand>
</feature>
<feature type="binding site" evidence="1">
    <location>
        <begin position="110"/>
        <end position="114"/>
    </location>
    <ligand>
        <name>substrate</name>
    </ligand>
</feature>
<feature type="binding site" evidence="1">
    <location>
        <position position="139"/>
    </location>
    <ligand>
        <name>FMN</name>
        <dbReference type="ChEBI" id="CHEBI:58210"/>
    </ligand>
</feature>
<feature type="binding site" evidence="1">
    <location>
        <position position="172"/>
    </location>
    <ligand>
        <name>FMN</name>
        <dbReference type="ChEBI" id="CHEBI:58210"/>
    </ligand>
</feature>
<feature type="binding site" evidence="1">
    <location>
        <position position="172"/>
    </location>
    <ligand>
        <name>substrate</name>
    </ligand>
</feature>
<feature type="binding site" evidence="1">
    <location>
        <position position="177"/>
    </location>
    <ligand>
        <name>substrate</name>
    </ligand>
</feature>
<feature type="binding site" evidence="1">
    <location>
        <position position="217"/>
    </location>
    <ligand>
        <name>FMN</name>
        <dbReference type="ChEBI" id="CHEBI:58210"/>
    </ligand>
</feature>
<feature type="binding site" evidence="1">
    <location>
        <position position="245"/>
    </location>
    <ligand>
        <name>FMN</name>
        <dbReference type="ChEBI" id="CHEBI:58210"/>
    </ligand>
</feature>
<feature type="binding site" evidence="1">
    <location>
        <begin position="246"/>
        <end position="247"/>
    </location>
    <ligand>
        <name>substrate</name>
    </ligand>
</feature>
<feature type="binding site" evidence="1">
    <location>
        <position position="268"/>
    </location>
    <ligand>
        <name>FMN</name>
        <dbReference type="ChEBI" id="CHEBI:58210"/>
    </ligand>
</feature>
<feature type="binding site" evidence="1">
    <location>
        <position position="297"/>
    </location>
    <ligand>
        <name>FMN</name>
        <dbReference type="ChEBI" id="CHEBI:58210"/>
    </ligand>
</feature>
<feature type="binding site" evidence="1">
    <location>
        <begin position="318"/>
        <end position="319"/>
    </location>
    <ligand>
        <name>FMN</name>
        <dbReference type="ChEBI" id="CHEBI:58210"/>
    </ligand>
</feature>
<accession>Q9F1U7</accession>
<gene>
    <name evidence="1" type="primary">pyrD</name>
</gene>
<proteinExistence type="inferred from homology"/>
<organism>
    <name type="scientific">Flavobacterium lutescens</name>
    <dbReference type="NCBI Taxonomy" id="255"/>
    <lineage>
        <taxon>Bacteria</taxon>
        <taxon>Pseudomonadati</taxon>
        <taxon>Pseudomonadota</taxon>
        <taxon>Gammaproteobacteria</taxon>
        <taxon>Pseudomonadales</taxon>
        <taxon>Pseudomonadaceae</taxon>
        <taxon>Pseudomonas</taxon>
    </lineage>
</organism>
<comment type="function">
    <text evidence="1">Catalyzes the conversion of dihydroorotate to orotate with quinone as electron acceptor.</text>
</comment>
<comment type="catalytic activity">
    <reaction evidence="1">
        <text>(S)-dihydroorotate + a quinone = orotate + a quinol</text>
        <dbReference type="Rhea" id="RHEA:30187"/>
        <dbReference type="ChEBI" id="CHEBI:24646"/>
        <dbReference type="ChEBI" id="CHEBI:30839"/>
        <dbReference type="ChEBI" id="CHEBI:30864"/>
        <dbReference type="ChEBI" id="CHEBI:132124"/>
        <dbReference type="EC" id="1.3.5.2"/>
    </reaction>
</comment>
<comment type="cofactor">
    <cofactor evidence="1">
        <name>FMN</name>
        <dbReference type="ChEBI" id="CHEBI:58210"/>
    </cofactor>
    <text evidence="1">Binds 1 FMN per subunit.</text>
</comment>
<comment type="pathway">
    <text evidence="1">Pyrimidine metabolism; UMP biosynthesis via de novo pathway; orotate from (S)-dihydroorotate (quinone route): step 1/1.</text>
</comment>
<comment type="subunit">
    <text evidence="1">Monomer.</text>
</comment>
<comment type="subcellular location">
    <subcellularLocation>
        <location evidence="1">Cell membrane</location>
        <topology evidence="1">Peripheral membrane protein</topology>
    </subcellularLocation>
</comment>
<comment type="similarity">
    <text evidence="1">Belongs to the dihydroorotate dehydrogenase family. Type 2 subfamily.</text>
</comment>
<dbReference type="EC" id="1.3.5.2" evidence="1"/>
<dbReference type="EMBL" id="AB042983">
    <property type="protein sequence ID" value="BAB19802.1"/>
    <property type="molecule type" value="Genomic_DNA"/>
</dbReference>
<dbReference type="SMR" id="Q9F1U7"/>
<dbReference type="UniPathway" id="UPA00070">
    <property type="reaction ID" value="UER00946"/>
</dbReference>
<dbReference type="GO" id="GO:0005737">
    <property type="term" value="C:cytoplasm"/>
    <property type="evidence" value="ECO:0007669"/>
    <property type="project" value="InterPro"/>
</dbReference>
<dbReference type="GO" id="GO:0005886">
    <property type="term" value="C:plasma membrane"/>
    <property type="evidence" value="ECO:0007669"/>
    <property type="project" value="UniProtKB-SubCell"/>
</dbReference>
<dbReference type="GO" id="GO:0106430">
    <property type="term" value="F:dihydroorotate dehydrogenase (quinone) activity"/>
    <property type="evidence" value="ECO:0007669"/>
    <property type="project" value="UniProtKB-EC"/>
</dbReference>
<dbReference type="GO" id="GO:0006207">
    <property type="term" value="P:'de novo' pyrimidine nucleobase biosynthetic process"/>
    <property type="evidence" value="ECO:0007669"/>
    <property type="project" value="InterPro"/>
</dbReference>
<dbReference type="GO" id="GO:0044205">
    <property type="term" value="P:'de novo' UMP biosynthetic process"/>
    <property type="evidence" value="ECO:0007669"/>
    <property type="project" value="UniProtKB-UniRule"/>
</dbReference>
<dbReference type="CDD" id="cd04738">
    <property type="entry name" value="DHOD_2_like"/>
    <property type="match status" value="1"/>
</dbReference>
<dbReference type="FunFam" id="3.20.20.70:FF:000028">
    <property type="entry name" value="Dihydroorotate dehydrogenase (quinone)"/>
    <property type="match status" value="1"/>
</dbReference>
<dbReference type="Gene3D" id="3.20.20.70">
    <property type="entry name" value="Aldolase class I"/>
    <property type="match status" value="1"/>
</dbReference>
<dbReference type="HAMAP" id="MF_00225">
    <property type="entry name" value="DHO_dh_type2"/>
    <property type="match status" value="1"/>
</dbReference>
<dbReference type="InterPro" id="IPR013785">
    <property type="entry name" value="Aldolase_TIM"/>
</dbReference>
<dbReference type="InterPro" id="IPR050074">
    <property type="entry name" value="DHO_dehydrogenase"/>
</dbReference>
<dbReference type="InterPro" id="IPR012135">
    <property type="entry name" value="Dihydroorotate_DH_1_2"/>
</dbReference>
<dbReference type="InterPro" id="IPR005719">
    <property type="entry name" value="Dihydroorotate_DH_2"/>
</dbReference>
<dbReference type="InterPro" id="IPR005720">
    <property type="entry name" value="Dihydroorotate_DH_cat"/>
</dbReference>
<dbReference type="InterPro" id="IPR001295">
    <property type="entry name" value="Dihydroorotate_DH_CS"/>
</dbReference>
<dbReference type="NCBIfam" id="NF003644">
    <property type="entry name" value="PRK05286.1-1"/>
    <property type="match status" value="1"/>
</dbReference>
<dbReference type="NCBIfam" id="NF003645">
    <property type="entry name" value="PRK05286.1-2"/>
    <property type="match status" value="1"/>
</dbReference>
<dbReference type="NCBIfam" id="NF003646">
    <property type="entry name" value="PRK05286.1-4"/>
    <property type="match status" value="1"/>
</dbReference>
<dbReference type="NCBIfam" id="NF003652">
    <property type="entry name" value="PRK05286.2-5"/>
    <property type="match status" value="1"/>
</dbReference>
<dbReference type="NCBIfam" id="TIGR01036">
    <property type="entry name" value="pyrD_sub2"/>
    <property type="match status" value="1"/>
</dbReference>
<dbReference type="PANTHER" id="PTHR48109:SF4">
    <property type="entry name" value="DIHYDROOROTATE DEHYDROGENASE (QUINONE), MITOCHONDRIAL"/>
    <property type="match status" value="1"/>
</dbReference>
<dbReference type="PANTHER" id="PTHR48109">
    <property type="entry name" value="DIHYDROOROTATE DEHYDROGENASE (QUINONE), MITOCHONDRIAL-RELATED"/>
    <property type="match status" value="1"/>
</dbReference>
<dbReference type="Pfam" id="PF01180">
    <property type="entry name" value="DHO_dh"/>
    <property type="match status" value="1"/>
</dbReference>
<dbReference type="PIRSF" id="PIRSF000164">
    <property type="entry name" value="DHO_oxidase"/>
    <property type="match status" value="1"/>
</dbReference>
<dbReference type="SUPFAM" id="SSF51395">
    <property type="entry name" value="FMN-linked oxidoreductases"/>
    <property type="match status" value="1"/>
</dbReference>
<dbReference type="PROSITE" id="PS00911">
    <property type="entry name" value="DHODEHASE_1"/>
    <property type="match status" value="1"/>
</dbReference>
<dbReference type="PROSITE" id="PS00912">
    <property type="entry name" value="DHODEHASE_2"/>
    <property type="match status" value="1"/>
</dbReference>
<name>PYRD_FLALU</name>
<sequence>MYSLLRPALFCMDAERAHGAGLRALDLAYRSGTLGLLASRPAPLPTRAFGLEFPNPVGLAAGLDKNGEHIDALFALGFGYVEIGTVTPRPQAGNPQPRLFRVPEHLGVINRMGFNNAGVDALVANVRAARRDRGILGINIGKNKDTPNELAHTDYLTCLEKVYALADYITVNISSPNTAGLRELQEEQALRELVSRLREGQETLAARHGKRVPMLVKVAPDLSDADVDAAARVLAELQVDGVIATNTTIARVGMENHPLASEAGGLSGAPVMARSTAVLRRLRTRLPESIPLIGVGGICSGADAAAKMSAGATMVQLYSGLVYRGPALVGECVESIRRRREAPSSGVAHL</sequence>
<keyword id="KW-1003">Cell membrane</keyword>
<keyword id="KW-0285">Flavoprotein</keyword>
<keyword id="KW-0288">FMN</keyword>
<keyword id="KW-0472">Membrane</keyword>
<keyword id="KW-0560">Oxidoreductase</keyword>
<keyword id="KW-0665">Pyrimidine biosynthesis</keyword>
<reference key="1">
    <citation type="journal article" date="2000" name="J. Biochem.">
        <title>Cloning and characterization of pcd encoding delta'-piperideine-6-carboxylate dehydrogenase from Flavobacterium lutescens IFO3084.</title>
        <authorList>
            <person name="Fujii T."/>
            <person name="Narita T."/>
            <person name="Agematu H."/>
            <person name="Agata N."/>
            <person name="Isshiki K."/>
        </authorList>
    </citation>
    <scope>NUCLEOTIDE SEQUENCE [GENOMIC DNA]</scope>
    <source>
        <strain>ATCC 25311 / DSM 2408 / IAM 1667 / NBRC 3084 / JCM 20244</strain>
    </source>
</reference>